<accession>Q31U62</accession>
<dbReference type="EMBL" id="CP000036">
    <property type="protein sequence ID" value="ABB68396.1"/>
    <property type="molecule type" value="Genomic_DNA"/>
</dbReference>
<dbReference type="RefSeq" id="WP_001296623.1">
    <property type="nucleotide sequence ID" value="NC_007613.1"/>
</dbReference>
<dbReference type="SMR" id="Q31U62"/>
<dbReference type="GeneID" id="93777970"/>
<dbReference type="KEGG" id="sbo:SBO_3945"/>
<dbReference type="HOGENOM" id="CLU_171174_2_0_6"/>
<dbReference type="Proteomes" id="UP000007067">
    <property type="component" value="Chromosome"/>
</dbReference>
<dbReference type="GO" id="GO:0005737">
    <property type="term" value="C:cytoplasm"/>
    <property type="evidence" value="ECO:0007669"/>
    <property type="project" value="UniProtKB-SubCell"/>
</dbReference>
<dbReference type="GO" id="GO:0000917">
    <property type="term" value="P:division septum assembly"/>
    <property type="evidence" value="ECO:0007669"/>
    <property type="project" value="UniProtKB-KW"/>
</dbReference>
<dbReference type="GO" id="GO:0043093">
    <property type="term" value="P:FtsZ-dependent cytokinesis"/>
    <property type="evidence" value="ECO:0007669"/>
    <property type="project" value="UniProtKB-UniRule"/>
</dbReference>
<dbReference type="FunFam" id="1.20.5.340:FF:000014">
    <property type="entry name" value="Cell division protein ZapB"/>
    <property type="match status" value="1"/>
</dbReference>
<dbReference type="Gene3D" id="1.20.5.340">
    <property type="match status" value="1"/>
</dbReference>
<dbReference type="HAMAP" id="MF_01196">
    <property type="entry name" value="ZapB"/>
    <property type="match status" value="1"/>
</dbReference>
<dbReference type="InterPro" id="IPR009252">
    <property type="entry name" value="Cell_div_ZapB"/>
</dbReference>
<dbReference type="NCBIfam" id="NF011951">
    <property type="entry name" value="PRK15422.1"/>
    <property type="match status" value="1"/>
</dbReference>
<dbReference type="Pfam" id="PF06005">
    <property type="entry name" value="ZapB"/>
    <property type="match status" value="1"/>
</dbReference>
<comment type="function">
    <text evidence="1">Non-essential, abundant cell division factor that is required for proper Z-ring formation. It is recruited early to the divisome by direct interaction with FtsZ, stimulating Z-ring assembly and thereby promoting cell division earlier in the cell cycle. Its recruitment to the Z-ring requires functional FtsA or ZipA.</text>
</comment>
<comment type="subunit">
    <text evidence="1">Homodimer. The ends of the coiled-coil dimer bind to each other, forming polymers. Interacts with FtsZ.</text>
</comment>
<comment type="subcellular location">
    <subcellularLocation>
        <location>Cytoplasm</location>
    </subcellularLocation>
    <text evidence="1">Localizes to the septum at mid-cell, in a FtsZ-like pattern.</text>
</comment>
<comment type="similarity">
    <text evidence="1">Belongs to the ZapB family.</text>
</comment>
<organism>
    <name type="scientific">Shigella boydii serotype 4 (strain Sb227)</name>
    <dbReference type="NCBI Taxonomy" id="300268"/>
    <lineage>
        <taxon>Bacteria</taxon>
        <taxon>Pseudomonadati</taxon>
        <taxon>Pseudomonadota</taxon>
        <taxon>Gammaproteobacteria</taxon>
        <taxon>Enterobacterales</taxon>
        <taxon>Enterobacteriaceae</taxon>
        <taxon>Shigella</taxon>
    </lineage>
</organism>
<sequence length="81" mass="9635">MTMSLEVFEKLEAKVQQAIDTITLLQMEIEELKEKNNSLSQEVQNAQHQREELERENNHLKEQQNGWQERLQALLGRMEEV</sequence>
<proteinExistence type="inferred from homology"/>
<name>ZAPB_SHIBS</name>
<feature type="chain" id="PRO_0000333933" description="Cell division protein ZapB">
    <location>
        <begin position="1"/>
        <end position="81"/>
    </location>
</feature>
<feature type="region of interest" description="Disordered" evidence="2">
    <location>
        <begin position="36"/>
        <end position="67"/>
    </location>
</feature>
<feature type="coiled-coil region" evidence="1">
    <location>
        <begin position="5"/>
        <end position="81"/>
    </location>
</feature>
<feature type="compositionally biased region" description="Polar residues" evidence="2">
    <location>
        <begin position="37"/>
        <end position="47"/>
    </location>
</feature>
<feature type="compositionally biased region" description="Basic and acidic residues" evidence="2">
    <location>
        <begin position="48"/>
        <end position="62"/>
    </location>
</feature>
<feature type="modified residue" description="N6-acetyllysine" evidence="1">
    <location>
        <position position="10"/>
    </location>
</feature>
<keyword id="KW-0007">Acetylation</keyword>
<keyword id="KW-0131">Cell cycle</keyword>
<keyword id="KW-0132">Cell division</keyword>
<keyword id="KW-0175">Coiled coil</keyword>
<keyword id="KW-0963">Cytoplasm</keyword>
<keyword id="KW-0717">Septation</keyword>
<protein>
    <recommendedName>
        <fullName evidence="1">Cell division protein ZapB</fullName>
    </recommendedName>
</protein>
<gene>
    <name evidence="1" type="primary">zapB</name>
    <name type="ordered locus">SBO_3945</name>
</gene>
<evidence type="ECO:0000255" key="1">
    <source>
        <dbReference type="HAMAP-Rule" id="MF_01196"/>
    </source>
</evidence>
<evidence type="ECO:0000256" key="2">
    <source>
        <dbReference type="SAM" id="MobiDB-lite"/>
    </source>
</evidence>
<reference key="1">
    <citation type="journal article" date="2005" name="Nucleic Acids Res.">
        <title>Genome dynamics and diversity of Shigella species, the etiologic agents of bacillary dysentery.</title>
        <authorList>
            <person name="Yang F."/>
            <person name="Yang J."/>
            <person name="Zhang X."/>
            <person name="Chen L."/>
            <person name="Jiang Y."/>
            <person name="Yan Y."/>
            <person name="Tang X."/>
            <person name="Wang J."/>
            <person name="Xiong Z."/>
            <person name="Dong J."/>
            <person name="Xue Y."/>
            <person name="Zhu Y."/>
            <person name="Xu X."/>
            <person name="Sun L."/>
            <person name="Chen S."/>
            <person name="Nie H."/>
            <person name="Peng J."/>
            <person name="Xu J."/>
            <person name="Wang Y."/>
            <person name="Yuan Z."/>
            <person name="Wen Y."/>
            <person name="Yao Z."/>
            <person name="Shen Y."/>
            <person name="Qiang B."/>
            <person name="Hou Y."/>
            <person name="Yu J."/>
            <person name="Jin Q."/>
        </authorList>
    </citation>
    <scope>NUCLEOTIDE SEQUENCE [LARGE SCALE GENOMIC DNA]</scope>
    <source>
        <strain>Sb227</strain>
    </source>
</reference>